<evidence type="ECO:0000255" key="1">
    <source>
        <dbReference type="HAMAP-Rule" id="MF_01200"/>
    </source>
</evidence>
<keyword id="KW-0210">Decarboxylase</keyword>
<keyword id="KW-0456">Lyase</keyword>
<keyword id="KW-0665">Pyrimidine biosynthesis</keyword>
<sequence length="230" mass="25257">MKDLPIIALDFESATKVNTFLDQFDEPLFVKIGMELFYQAGPDLIKSIKSRGHDIFLDLKLHDIPNTVEKAMEGLGKLDVDLVNVHAAGGTDMMKAAVRGLHKYSNDTKIIAVTQLTSTTEEMLRNEQNIQTTIEEAVLNYATLTQQAGLDGVVCSPLEAELLTNKLGSNFLKVTPGIRPQGAAVDDQKRITTPEDAKQLGATHIVVGRPITQSENPVESYHTIKESWLG</sequence>
<organism>
    <name type="scientific">Staphylococcus haemolyticus (strain JCSC1435)</name>
    <dbReference type="NCBI Taxonomy" id="279808"/>
    <lineage>
        <taxon>Bacteria</taxon>
        <taxon>Bacillati</taxon>
        <taxon>Bacillota</taxon>
        <taxon>Bacilli</taxon>
        <taxon>Bacillales</taxon>
        <taxon>Staphylococcaceae</taxon>
        <taxon>Staphylococcus</taxon>
    </lineage>
</organism>
<protein>
    <recommendedName>
        <fullName evidence="1">Orotidine 5'-phosphate decarboxylase</fullName>
        <ecNumber evidence="1">4.1.1.23</ecNumber>
    </recommendedName>
    <alternativeName>
        <fullName evidence="1">OMP decarboxylase</fullName>
        <shortName evidence="1">OMPDCase</shortName>
        <shortName evidence="1">OMPdecase</shortName>
    </alternativeName>
</protein>
<proteinExistence type="inferred from homology"/>
<accession>Q4L5Q6</accession>
<dbReference type="EC" id="4.1.1.23" evidence="1"/>
<dbReference type="EMBL" id="AP006716">
    <property type="protein sequence ID" value="BAE05019.1"/>
    <property type="molecule type" value="Genomic_DNA"/>
</dbReference>
<dbReference type="RefSeq" id="WP_011275995.1">
    <property type="nucleotide sequence ID" value="NC_007168.1"/>
</dbReference>
<dbReference type="SMR" id="Q4L5Q6"/>
<dbReference type="KEGG" id="sha:SH1710"/>
<dbReference type="eggNOG" id="COG0284">
    <property type="taxonomic scope" value="Bacteria"/>
</dbReference>
<dbReference type="HOGENOM" id="CLU_067069_1_1_9"/>
<dbReference type="OrthoDB" id="9806203at2"/>
<dbReference type="UniPathway" id="UPA00070">
    <property type="reaction ID" value="UER00120"/>
</dbReference>
<dbReference type="Proteomes" id="UP000000543">
    <property type="component" value="Chromosome"/>
</dbReference>
<dbReference type="GO" id="GO:0005829">
    <property type="term" value="C:cytosol"/>
    <property type="evidence" value="ECO:0007669"/>
    <property type="project" value="TreeGrafter"/>
</dbReference>
<dbReference type="GO" id="GO:0004590">
    <property type="term" value="F:orotidine-5'-phosphate decarboxylase activity"/>
    <property type="evidence" value="ECO:0007669"/>
    <property type="project" value="UniProtKB-UniRule"/>
</dbReference>
<dbReference type="GO" id="GO:0006207">
    <property type="term" value="P:'de novo' pyrimidine nucleobase biosynthetic process"/>
    <property type="evidence" value="ECO:0007669"/>
    <property type="project" value="InterPro"/>
</dbReference>
<dbReference type="GO" id="GO:0044205">
    <property type="term" value="P:'de novo' UMP biosynthetic process"/>
    <property type="evidence" value="ECO:0007669"/>
    <property type="project" value="UniProtKB-UniRule"/>
</dbReference>
<dbReference type="CDD" id="cd04725">
    <property type="entry name" value="OMP_decarboxylase_like"/>
    <property type="match status" value="1"/>
</dbReference>
<dbReference type="FunFam" id="3.20.20.70:FF:000015">
    <property type="entry name" value="Orotidine 5'-phosphate decarboxylase"/>
    <property type="match status" value="1"/>
</dbReference>
<dbReference type="Gene3D" id="3.20.20.70">
    <property type="entry name" value="Aldolase class I"/>
    <property type="match status" value="1"/>
</dbReference>
<dbReference type="HAMAP" id="MF_01200_B">
    <property type="entry name" value="OMPdecase_type1_B"/>
    <property type="match status" value="1"/>
</dbReference>
<dbReference type="InterPro" id="IPR013785">
    <property type="entry name" value="Aldolase_TIM"/>
</dbReference>
<dbReference type="InterPro" id="IPR014732">
    <property type="entry name" value="OMPdecase"/>
</dbReference>
<dbReference type="InterPro" id="IPR018089">
    <property type="entry name" value="OMPdecase_AS"/>
</dbReference>
<dbReference type="InterPro" id="IPR047596">
    <property type="entry name" value="OMPdecase_bac"/>
</dbReference>
<dbReference type="InterPro" id="IPR001754">
    <property type="entry name" value="OMPdeCOase_dom"/>
</dbReference>
<dbReference type="InterPro" id="IPR011060">
    <property type="entry name" value="RibuloseP-bd_barrel"/>
</dbReference>
<dbReference type="NCBIfam" id="NF001273">
    <property type="entry name" value="PRK00230.1"/>
    <property type="match status" value="1"/>
</dbReference>
<dbReference type="NCBIfam" id="TIGR01740">
    <property type="entry name" value="pyrF"/>
    <property type="match status" value="1"/>
</dbReference>
<dbReference type="PANTHER" id="PTHR32119">
    <property type="entry name" value="OROTIDINE 5'-PHOSPHATE DECARBOXYLASE"/>
    <property type="match status" value="1"/>
</dbReference>
<dbReference type="PANTHER" id="PTHR32119:SF2">
    <property type="entry name" value="OROTIDINE 5'-PHOSPHATE DECARBOXYLASE"/>
    <property type="match status" value="1"/>
</dbReference>
<dbReference type="Pfam" id="PF00215">
    <property type="entry name" value="OMPdecase"/>
    <property type="match status" value="1"/>
</dbReference>
<dbReference type="SMART" id="SM00934">
    <property type="entry name" value="OMPdecase"/>
    <property type="match status" value="1"/>
</dbReference>
<dbReference type="SUPFAM" id="SSF51366">
    <property type="entry name" value="Ribulose-phoshate binding barrel"/>
    <property type="match status" value="1"/>
</dbReference>
<dbReference type="PROSITE" id="PS00156">
    <property type="entry name" value="OMPDECASE"/>
    <property type="match status" value="1"/>
</dbReference>
<comment type="function">
    <text evidence="1">Catalyzes the decarboxylation of orotidine 5'-monophosphate (OMP) to uridine 5'-monophosphate (UMP).</text>
</comment>
<comment type="catalytic activity">
    <reaction evidence="1">
        <text>orotidine 5'-phosphate + H(+) = UMP + CO2</text>
        <dbReference type="Rhea" id="RHEA:11596"/>
        <dbReference type="ChEBI" id="CHEBI:15378"/>
        <dbReference type="ChEBI" id="CHEBI:16526"/>
        <dbReference type="ChEBI" id="CHEBI:57538"/>
        <dbReference type="ChEBI" id="CHEBI:57865"/>
        <dbReference type="EC" id="4.1.1.23"/>
    </reaction>
</comment>
<comment type="pathway">
    <text evidence="1">Pyrimidine metabolism; UMP biosynthesis via de novo pathway; UMP from orotate: step 2/2.</text>
</comment>
<comment type="subunit">
    <text evidence="1">Homodimer.</text>
</comment>
<comment type="similarity">
    <text evidence="1">Belongs to the OMP decarboxylase family. Type 1 subfamily.</text>
</comment>
<name>PYRF_STAHJ</name>
<feature type="chain" id="PRO_0000134582" description="Orotidine 5'-phosphate decarboxylase">
    <location>
        <begin position="1"/>
        <end position="230"/>
    </location>
</feature>
<feature type="active site" description="Proton donor" evidence="1">
    <location>
        <position position="60"/>
    </location>
</feature>
<feature type="binding site" evidence="1">
    <location>
        <position position="10"/>
    </location>
    <ligand>
        <name>substrate</name>
    </ligand>
</feature>
<feature type="binding site" evidence="1">
    <location>
        <position position="31"/>
    </location>
    <ligand>
        <name>substrate</name>
    </ligand>
</feature>
<feature type="binding site" evidence="1">
    <location>
        <begin position="58"/>
        <end position="67"/>
    </location>
    <ligand>
        <name>substrate</name>
    </ligand>
</feature>
<feature type="binding site" evidence="1">
    <location>
        <position position="117"/>
    </location>
    <ligand>
        <name>substrate</name>
    </ligand>
</feature>
<feature type="binding site" evidence="1">
    <location>
        <position position="179"/>
    </location>
    <ligand>
        <name>substrate</name>
    </ligand>
</feature>
<feature type="binding site" evidence="1">
    <location>
        <position position="188"/>
    </location>
    <ligand>
        <name>substrate</name>
    </ligand>
</feature>
<feature type="binding site" evidence="1">
    <location>
        <position position="208"/>
    </location>
    <ligand>
        <name>substrate</name>
    </ligand>
</feature>
<feature type="binding site" evidence="1">
    <location>
        <position position="209"/>
    </location>
    <ligand>
        <name>substrate</name>
    </ligand>
</feature>
<reference key="1">
    <citation type="journal article" date="2005" name="J. Bacteriol.">
        <title>Whole-genome sequencing of Staphylococcus haemolyticus uncovers the extreme plasticity of its genome and the evolution of human-colonizing staphylococcal species.</title>
        <authorList>
            <person name="Takeuchi F."/>
            <person name="Watanabe S."/>
            <person name="Baba T."/>
            <person name="Yuzawa H."/>
            <person name="Ito T."/>
            <person name="Morimoto Y."/>
            <person name="Kuroda M."/>
            <person name="Cui L."/>
            <person name="Takahashi M."/>
            <person name="Ankai A."/>
            <person name="Baba S."/>
            <person name="Fukui S."/>
            <person name="Lee J.C."/>
            <person name="Hiramatsu K."/>
        </authorList>
    </citation>
    <scope>NUCLEOTIDE SEQUENCE [LARGE SCALE GENOMIC DNA]</scope>
    <source>
        <strain>JCSC1435</strain>
    </source>
</reference>
<gene>
    <name evidence="1" type="primary">pyrF</name>
    <name type="ordered locus">SH1710</name>
</gene>